<feature type="chain" id="PRO_1000201604" description="Aspartate carbamoyltransferase catalytic subunit">
    <location>
        <begin position="1"/>
        <end position="303"/>
    </location>
</feature>
<feature type="binding site" evidence="1">
    <location>
        <position position="51"/>
    </location>
    <ligand>
        <name>carbamoyl phosphate</name>
        <dbReference type="ChEBI" id="CHEBI:58228"/>
    </ligand>
</feature>
<feature type="binding site" evidence="1">
    <location>
        <position position="52"/>
    </location>
    <ligand>
        <name>carbamoyl phosphate</name>
        <dbReference type="ChEBI" id="CHEBI:58228"/>
    </ligand>
</feature>
<feature type="binding site" evidence="1">
    <location>
        <position position="80"/>
    </location>
    <ligand>
        <name>L-aspartate</name>
        <dbReference type="ChEBI" id="CHEBI:29991"/>
    </ligand>
</feature>
<feature type="binding site" evidence="1">
    <location>
        <position position="101"/>
    </location>
    <ligand>
        <name>carbamoyl phosphate</name>
        <dbReference type="ChEBI" id="CHEBI:58228"/>
    </ligand>
</feature>
<feature type="binding site" evidence="1">
    <location>
        <position position="129"/>
    </location>
    <ligand>
        <name>carbamoyl phosphate</name>
        <dbReference type="ChEBI" id="CHEBI:58228"/>
    </ligand>
</feature>
<feature type="binding site" evidence="1">
    <location>
        <position position="132"/>
    </location>
    <ligand>
        <name>carbamoyl phosphate</name>
        <dbReference type="ChEBI" id="CHEBI:58228"/>
    </ligand>
</feature>
<feature type="binding site" evidence="1">
    <location>
        <position position="162"/>
    </location>
    <ligand>
        <name>L-aspartate</name>
        <dbReference type="ChEBI" id="CHEBI:29991"/>
    </ligand>
</feature>
<feature type="binding site" evidence="1">
    <location>
        <position position="221"/>
    </location>
    <ligand>
        <name>L-aspartate</name>
        <dbReference type="ChEBI" id="CHEBI:29991"/>
    </ligand>
</feature>
<feature type="binding site" evidence="1">
    <location>
        <position position="260"/>
    </location>
    <ligand>
        <name>carbamoyl phosphate</name>
        <dbReference type="ChEBI" id="CHEBI:58228"/>
    </ligand>
</feature>
<feature type="binding site" evidence="1">
    <location>
        <position position="261"/>
    </location>
    <ligand>
        <name>carbamoyl phosphate</name>
        <dbReference type="ChEBI" id="CHEBI:58228"/>
    </ligand>
</feature>
<keyword id="KW-0665">Pyrimidine biosynthesis</keyword>
<keyword id="KW-0808">Transferase</keyword>
<gene>
    <name evidence="1" type="primary">pyrB</name>
    <name type="ordered locus">M1425_1518</name>
</gene>
<accession>C3MW45</accession>
<comment type="function">
    <text evidence="1">Catalyzes the condensation of carbamoyl phosphate and aspartate to form carbamoyl aspartate and inorganic phosphate, the committed step in the de novo pyrimidine nucleotide biosynthesis pathway.</text>
</comment>
<comment type="catalytic activity">
    <reaction evidence="1">
        <text>carbamoyl phosphate + L-aspartate = N-carbamoyl-L-aspartate + phosphate + H(+)</text>
        <dbReference type="Rhea" id="RHEA:20013"/>
        <dbReference type="ChEBI" id="CHEBI:15378"/>
        <dbReference type="ChEBI" id="CHEBI:29991"/>
        <dbReference type="ChEBI" id="CHEBI:32814"/>
        <dbReference type="ChEBI" id="CHEBI:43474"/>
        <dbReference type="ChEBI" id="CHEBI:58228"/>
        <dbReference type="EC" id="2.1.3.2"/>
    </reaction>
</comment>
<comment type="pathway">
    <text evidence="1">Pyrimidine metabolism; UMP biosynthesis via de novo pathway; (S)-dihydroorotate from bicarbonate: step 2/3.</text>
</comment>
<comment type="subunit">
    <text evidence="1">Heterooligomer of catalytic and regulatory chains.</text>
</comment>
<comment type="similarity">
    <text evidence="1">Belongs to the aspartate/ornithine carbamoyltransferase superfamily. ATCase family.</text>
</comment>
<protein>
    <recommendedName>
        <fullName evidence="1">Aspartate carbamoyltransferase catalytic subunit</fullName>
        <ecNumber evidence="1">2.1.3.2</ecNumber>
    </recommendedName>
    <alternativeName>
        <fullName evidence="1">Aspartate transcarbamylase</fullName>
        <shortName evidence="1">ATCase</shortName>
    </alternativeName>
</protein>
<organism>
    <name type="scientific">Saccharolobus islandicus (strain M.14.25 / Kamchatka #1)</name>
    <name type="common">Sulfolobus islandicus</name>
    <dbReference type="NCBI Taxonomy" id="427317"/>
    <lineage>
        <taxon>Archaea</taxon>
        <taxon>Thermoproteota</taxon>
        <taxon>Thermoprotei</taxon>
        <taxon>Sulfolobales</taxon>
        <taxon>Sulfolobaceae</taxon>
        <taxon>Saccharolobus</taxon>
    </lineage>
</organism>
<evidence type="ECO:0000255" key="1">
    <source>
        <dbReference type="HAMAP-Rule" id="MF_00001"/>
    </source>
</evidence>
<reference key="1">
    <citation type="journal article" date="2009" name="Proc. Natl. Acad. Sci. U.S.A.">
        <title>Biogeography of the Sulfolobus islandicus pan-genome.</title>
        <authorList>
            <person name="Reno M.L."/>
            <person name="Held N.L."/>
            <person name="Fields C.J."/>
            <person name="Burke P.V."/>
            <person name="Whitaker R.J."/>
        </authorList>
    </citation>
    <scope>NUCLEOTIDE SEQUENCE [LARGE SCALE GENOMIC DNA]</scope>
    <source>
        <strain>M.14.25 / Kamchatka #1</strain>
    </source>
</reference>
<dbReference type="EC" id="2.1.3.2" evidence="1"/>
<dbReference type="EMBL" id="CP001400">
    <property type="protein sequence ID" value="ACP38267.1"/>
    <property type="molecule type" value="Genomic_DNA"/>
</dbReference>
<dbReference type="RefSeq" id="WP_012711512.1">
    <property type="nucleotide sequence ID" value="NC_012588.1"/>
</dbReference>
<dbReference type="SMR" id="C3MW45"/>
<dbReference type="GeneID" id="78428881"/>
<dbReference type="KEGG" id="sia:M1425_1518"/>
<dbReference type="HOGENOM" id="CLU_043846_1_2_2"/>
<dbReference type="UniPathway" id="UPA00070">
    <property type="reaction ID" value="UER00116"/>
</dbReference>
<dbReference type="Proteomes" id="UP000001350">
    <property type="component" value="Chromosome"/>
</dbReference>
<dbReference type="GO" id="GO:0016597">
    <property type="term" value="F:amino acid binding"/>
    <property type="evidence" value="ECO:0007669"/>
    <property type="project" value="InterPro"/>
</dbReference>
<dbReference type="GO" id="GO:0004070">
    <property type="term" value="F:aspartate carbamoyltransferase activity"/>
    <property type="evidence" value="ECO:0007669"/>
    <property type="project" value="UniProtKB-UniRule"/>
</dbReference>
<dbReference type="GO" id="GO:0006207">
    <property type="term" value="P:'de novo' pyrimidine nucleobase biosynthetic process"/>
    <property type="evidence" value="ECO:0007669"/>
    <property type="project" value="InterPro"/>
</dbReference>
<dbReference type="GO" id="GO:0044205">
    <property type="term" value="P:'de novo' UMP biosynthetic process"/>
    <property type="evidence" value="ECO:0007669"/>
    <property type="project" value="UniProtKB-UniRule"/>
</dbReference>
<dbReference type="GO" id="GO:0006520">
    <property type="term" value="P:amino acid metabolic process"/>
    <property type="evidence" value="ECO:0007669"/>
    <property type="project" value="InterPro"/>
</dbReference>
<dbReference type="FunFam" id="3.40.50.1370:FF:000021">
    <property type="entry name" value="Aspartate carbamoyltransferase"/>
    <property type="match status" value="1"/>
</dbReference>
<dbReference type="Gene3D" id="3.40.50.1370">
    <property type="entry name" value="Aspartate/ornithine carbamoyltransferase"/>
    <property type="match status" value="2"/>
</dbReference>
<dbReference type="HAMAP" id="MF_00001">
    <property type="entry name" value="Asp_carb_tr"/>
    <property type="match status" value="1"/>
</dbReference>
<dbReference type="InterPro" id="IPR006132">
    <property type="entry name" value="Asp/Orn_carbamoyltranf_P-bd"/>
</dbReference>
<dbReference type="InterPro" id="IPR006130">
    <property type="entry name" value="Asp/Orn_carbamoylTrfase"/>
</dbReference>
<dbReference type="InterPro" id="IPR036901">
    <property type="entry name" value="Asp/Orn_carbamoylTrfase_sf"/>
</dbReference>
<dbReference type="InterPro" id="IPR002082">
    <property type="entry name" value="Asp_carbamoyltransf"/>
</dbReference>
<dbReference type="InterPro" id="IPR006131">
    <property type="entry name" value="Asp_carbamoyltransf_Asp/Orn-bd"/>
</dbReference>
<dbReference type="NCBIfam" id="TIGR00670">
    <property type="entry name" value="asp_carb_tr"/>
    <property type="match status" value="1"/>
</dbReference>
<dbReference type="NCBIfam" id="NF002032">
    <property type="entry name" value="PRK00856.1"/>
    <property type="match status" value="1"/>
</dbReference>
<dbReference type="PANTHER" id="PTHR45753:SF6">
    <property type="entry name" value="ASPARTATE CARBAMOYLTRANSFERASE"/>
    <property type="match status" value="1"/>
</dbReference>
<dbReference type="PANTHER" id="PTHR45753">
    <property type="entry name" value="ORNITHINE CARBAMOYLTRANSFERASE, MITOCHONDRIAL"/>
    <property type="match status" value="1"/>
</dbReference>
<dbReference type="Pfam" id="PF00185">
    <property type="entry name" value="OTCace"/>
    <property type="match status" value="1"/>
</dbReference>
<dbReference type="Pfam" id="PF02729">
    <property type="entry name" value="OTCace_N"/>
    <property type="match status" value="1"/>
</dbReference>
<dbReference type="PRINTS" id="PR00100">
    <property type="entry name" value="AOTCASE"/>
</dbReference>
<dbReference type="PRINTS" id="PR00101">
    <property type="entry name" value="ATCASE"/>
</dbReference>
<dbReference type="SUPFAM" id="SSF53671">
    <property type="entry name" value="Aspartate/ornithine carbamoyltransferase"/>
    <property type="match status" value="1"/>
</dbReference>
<dbReference type="PROSITE" id="PS00097">
    <property type="entry name" value="CARBAMOYLTRANSFERASE"/>
    <property type="match status" value="1"/>
</dbReference>
<name>PYRB_SACI4</name>
<proteinExistence type="inferred from homology"/>
<sequence>MRLRHVVSSLDLTRDDYFRIFELADKFSNVKKLNYLSGKVVSLAFFEPSTRTAQSFHTAAIKLGADVIGFASEESTSIAKGENLADTIRMLNNYSNCIVMRHKFDGAALFASEISDIPIINAGDGKHEHPTQALIDLYTIYKVFGEIDGRTFGLLGDLKYARTVNSLLRALTRFKPKKIFLISPSQLKVRREILDGLNYPVIETENPYDVIQDIDVLYVTRIQKERFVDELEYEKVKESYVVDLKLVNMMKKDGIILHPLPRVTEIDRKVDKTTNAKYFYQASLAVPVRMALFYEVLGERKDD</sequence>